<comment type="catalytic activity">
    <reaction evidence="1">
        <text>[(1-&gt;4)-alpha-D-galacturonosyl methyl ester](n) + n H2O = [(1-&gt;4)-alpha-D-galacturonosyl](n) + n methanol + n H(+)</text>
        <dbReference type="Rhea" id="RHEA:22380"/>
        <dbReference type="Rhea" id="RHEA-COMP:14570"/>
        <dbReference type="Rhea" id="RHEA-COMP:14573"/>
        <dbReference type="ChEBI" id="CHEBI:15377"/>
        <dbReference type="ChEBI" id="CHEBI:15378"/>
        <dbReference type="ChEBI" id="CHEBI:17790"/>
        <dbReference type="ChEBI" id="CHEBI:140522"/>
        <dbReference type="ChEBI" id="CHEBI:140523"/>
        <dbReference type="EC" id="3.1.1.11"/>
    </reaction>
</comment>
<comment type="pathway">
    <text>Glycan metabolism; pectin degradation; 2-dehydro-3-deoxy-D-gluconate from pectin: step 1/5.</text>
</comment>
<comment type="subcellular location">
    <subcellularLocation>
        <location evidence="1">Secreted</location>
        <location evidence="1">Cell wall</location>
    </subcellularLocation>
</comment>
<comment type="similarity">
    <text evidence="2">Belongs to the pectinesterase family.</text>
</comment>
<protein>
    <recommendedName>
        <fullName evidence="1">Pectinesterase</fullName>
        <shortName evidence="1">PE</shortName>
        <ecNumber>3.1.1.11</ecNumber>
    </recommendedName>
    <alternativeName>
        <fullName evidence="1">Pectin methylesterase</fullName>
    </alternativeName>
</protein>
<evidence type="ECO:0000250" key="1">
    <source>
        <dbReference type="UniProtKB" id="P83218"/>
    </source>
</evidence>
<evidence type="ECO:0000255" key="2"/>
<evidence type="ECO:0000255" key="3">
    <source>
        <dbReference type="PROSITE-ProRule" id="PRU10040"/>
    </source>
</evidence>
<evidence type="ECO:0000305" key="4"/>
<sequence>IDAFQDTLYTHTLRTYLGRPWK</sequence>
<accession>P86085</accession>
<reference evidence="4" key="1">
    <citation type="submission" date="2008-07" db="UniProtKB">
        <authorList>
            <person name="Almagro L."/>
            <person name="Sabater Jara A.B."/>
            <person name="Pedreno M.A."/>
        </authorList>
    </citation>
    <scope>PROTEIN SEQUENCE</scope>
</reference>
<keyword id="KW-0063">Aspartyl esterase</keyword>
<keyword id="KW-0134">Cell wall</keyword>
<keyword id="KW-0961">Cell wall biogenesis/degradation</keyword>
<keyword id="KW-0903">Direct protein sequencing</keyword>
<keyword id="KW-0378">Hydrolase</keyword>
<keyword id="KW-0964">Secreted</keyword>
<proteinExistence type="evidence at protein level"/>
<dbReference type="EC" id="3.1.1.11"/>
<dbReference type="UniPathway" id="UPA00545">
    <property type="reaction ID" value="UER00823"/>
</dbReference>
<dbReference type="GO" id="GO:0005576">
    <property type="term" value="C:extracellular region"/>
    <property type="evidence" value="ECO:0007669"/>
    <property type="project" value="UniProtKB-KW"/>
</dbReference>
<dbReference type="GO" id="GO:0030599">
    <property type="term" value="F:pectinesterase activity"/>
    <property type="evidence" value="ECO:0007669"/>
    <property type="project" value="UniProtKB-EC"/>
</dbReference>
<dbReference type="GO" id="GO:0071555">
    <property type="term" value="P:cell wall organization"/>
    <property type="evidence" value="ECO:0007669"/>
    <property type="project" value="UniProtKB-KW"/>
</dbReference>
<dbReference type="GO" id="GO:0045490">
    <property type="term" value="P:pectin catabolic process"/>
    <property type="evidence" value="ECO:0007669"/>
    <property type="project" value="UniProtKB-UniPathway"/>
</dbReference>
<name>PME_CAPCH</name>
<organism>
    <name type="scientific">Capsicum chinense</name>
    <name type="common">Scotch bonnet</name>
    <name type="synonym">Bonnet pepper</name>
    <dbReference type="NCBI Taxonomy" id="80379"/>
    <lineage>
        <taxon>Eukaryota</taxon>
        <taxon>Viridiplantae</taxon>
        <taxon>Streptophyta</taxon>
        <taxon>Embryophyta</taxon>
        <taxon>Tracheophyta</taxon>
        <taxon>Spermatophyta</taxon>
        <taxon>Magnoliopsida</taxon>
        <taxon>eudicotyledons</taxon>
        <taxon>Gunneridae</taxon>
        <taxon>Pentapetalae</taxon>
        <taxon>asterids</taxon>
        <taxon>lamiids</taxon>
        <taxon>Solanales</taxon>
        <taxon>Solanaceae</taxon>
        <taxon>Solanoideae</taxon>
        <taxon>Capsiceae</taxon>
        <taxon>Capsicum</taxon>
    </lineage>
</organism>
<feature type="chain" id="PRO_0000362164" description="Pectinesterase">
    <location>
        <begin position="1" status="less than"/>
        <end position="22" status="greater than"/>
    </location>
</feature>
<feature type="active site" description="Proton donor" evidence="1 3">
    <location>
        <position position="6"/>
    </location>
</feature>
<feature type="binding site" evidence="1">
    <location>
        <position position="19"/>
    </location>
    <ligand>
        <name>substrate</name>
    </ligand>
</feature>
<feature type="binding site" evidence="1">
    <location>
        <position position="21"/>
    </location>
    <ligand>
        <name>substrate</name>
    </ligand>
</feature>
<feature type="site" description="Transition state stabilizer" evidence="1">
    <location>
        <position position="5"/>
    </location>
</feature>
<feature type="unsure residue" description="I or L">
    <location>
        <position position="1"/>
    </location>
</feature>
<feature type="unsure residue" description="F or M">
    <location>
        <position position="4"/>
    </location>
</feature>
<feature type="unsure residue" description="Q or K">
    <location>
        <position position="5"/>
    </location>
</feature>
<feature type="unsure residue" description="L or I">
    <location>
        <position position="8"/>
    </location>
</feature>
<feature type="unsure residue" description="L or I">
    <location>
        <position position="13"/>
    </location>
</feature>
<feature type="unsure residue" description="L or I">
    <location>
        <position position="17"/>
    </location>
</feature>
<feature type="unsure residue" description="K or Q">
    <location>
        <position position="22"/>
    </location>
</feature>
<feature type="non-consecutive residues" evidence="4">
    <location>
        <begin position="14"/>
        <end position="15"/>
    </location>
</feature>
<feature type="non-terminal residue">
    <location>
        <position position="1"/>
    </location>
</feature>
<feature type="non-terminal residue">
    <location>
        <position position="22"/>
    </location>
</feature>